<gene>
    <name evidence="1" type="primary">eno</name>
    <name type="ordered locus">BMA1689</name>
</gene>
<sequence>MSAIVDIIGREILDSRGNPTVECDVLLESGTMGRAAVPSGASTGSREAIELRDGEAGRYGGKGVLKAVEHINTEISEAIMGLDASEQAFLDKTLLELDGTDNKSRLGANAMLAVSMAVAKAAAEEAGLPLYRYFGGSGAMQLPVPMMNIVNGGAHANNSLDIQEFMIVPVSQPTFREALRCGAEVFHALKKILGDRGMSTAVGDEGGFAPNFGSNDECLSTILQAIEKAGYRAGEDVLLALDCAASEFYHDGKYQLAGEGLQLSSAEFTDYLATLADKFPIVSIEDGMHEGDWDGWKLLTERLGKKVQLVGDDLFVTNTRILKEGIEKGIANSILIKINQIGTLTETFAAIEMAKRARYTAVISHRSGETEDSTIADIAVGLNAGQIKTGSLSRSDRISKYNQLLRIEEDLGDIASYPGKSAFYNLR</sequence>
<dbReference type="EC" id="4.2.1.11" evidence="1"/>
<dbReference type="EMBL" id="CP000010">
    <property type="protein sequence ID" value="AAU47800.1"/>
    <property type="molecule type" value="Genomic_DNA"/>
</dbReference>
<dbReference type="RefSeq" id="WP_004192585.1">
    <property type="nucleotide sequence ID" value="NC_006348.1"/>
</dbReference>
<dbReference type="RefSeq" id="YP_103309.1">
    <property type="nucleotide sequence ID" value="NC_006348.1"/>
</dbReference>
<dbReference type="SMR" id="Q62J10"/>
<dbReference type="GeneID" id="93060827"/>
<dbReference type="KEGG" id="bma:BMA1689"/>
<dbReference type="PATRIC" id="fig|243160.12.peg.1727"/>
<dbReference type="eggNOG" id="COG0148">
    <property type="taxonomic scope" value="Bacteria"/>
</dbReference>
<dbReference type="HOGENOM" id="CLU_031223_2_1_4"/>
<dbReference type="UniPathway" id="UPA00109">
    <property type="reaction ID" value="UER00187"/>
</dbReference>
<dbReference type="Proteomes" id="UP000006693">
    <property type="component" value="Chromosome 1"/>
</dbReference>
<dbReference type="GO" id="GO:0009986">
    <property type="term" value="C:cell surface"/>
    <property type="evidence" value="ECO:0007669"/>
    <property type="project" value="UniProtKB-SubCell"/>
</dbReference>
<dbReference type="GO" id="GO:0005576">
    <property type="term" value="C:extracellular region"/>
    <property type="evidence" value="ECO:0007669"/>
    <property type="project" value="UniProtKB-SubCell"/>
</dbReference>
<dbReference type="GO" id="GO:0000015">
    <property type="term" value="C:phosphopyruvate hydratase complex"/>
    <property type="evidence" value="ECO:0007669"/>
    <property type="project" value="InterPro"/>
</dbReference>
<dbReference type="GO" id="GO:0000287">
    <property type="term" value="F:magnesium ion binding"/>
    <property type="evidence" value="ECO:0007669"/>
    <property type="project" value="UniProtKB-UniRule"/>
</dbReference>
<dbReference type="GO" id="GO:0004634">
    <property type="term" value="F:phosphopyruvate hydratase activity"/>
    <property type="evidence" value="ECO:0007669"/>
    <property type="project" value="UniProtKB-UniRule"/>
</dbReference>
<dbReference type="GO" id="GO:0006096">
    <property type="term" value="P:glycolytic process"/>
    <property type="evidence" value="ECO:0007669"/>
    <property type="project" value="UniProtKB-UniRule"/>
</dbReference>
<dbReference type="CDD" id="cd03313">
    <property type="entry name" value="enolase"/>
    <property type="match status" value="1"/>
</dbReference>
<dbReference type="FunFam" id="3.20.20.120:FF:000001">
    <property type="entry name" value="Enolase"/>
    <property type="match status" value="1"/>
</dbReference>
<dbReference type="FunFam" id="3.30.390.10:FF:000001">
    <property type="entry name" value="Enolase"/>
    <property type="match status" value="1"/>
</dbReference>
<dbReference type="Gene3D" id="3.20.20.120">
    <property type="entry name" value="Enolase-like C-terminal domain"/>
    <property type="match status" value="1"/>
</dbReference>
<dbReference type="Gene3D" id="3.30.390.10">
    <property type="entry name" value="Enolase-like, N-terminal domain"/>
    <property type="match status" value="1"/>
</dbReference>
<dbReference type="HAMAP" id="MF_00318">
    <property type="entry name" value="Enolase"/>
    <property type="match status" value="1"/>
</dbReference>
<dbReference type="InterPro" id="IPR000941">
    <property type="entry name" value="Enolase"/>
</dbReference>
<dbReference type="InterPro" id="IPR036849">
    <property type="entry name" value="Enolase-like_C_sf"/>
</dbReference>
<dbReference type="InterPro" id="IPR029017">
    <property type="entry name" value="Enolase-like_N"/>
</dbReference>
<dbReference type="InterPro" id="IPR020810">
    <property type="entry name" value="Enolase_C"/>
</dbReference>
<dbReference type="InterPro" id="IPR020809">
    <property type="entry name" value="Enolase_CS"/>
</dbReference>
<dbReference type="InterPro" id="IPR020811">
    <property type="entry name" value="Enolase_N"/>
</dbReference>
<dbReference type="NCBIfam" id="TIGR01060">
    <property type="entry name" value="eno"/>
    <property type="match status" value="1"/>
</dbReference>
<dbReference type="PANTHER" id="PTHR11902">
    <property type="entry name" value="ENOLASE"/>
    <property type="match status" value="1"/>
</dbReference>
<dbReference type="PANTHER" id="PTHR11902:SF1">
    <property type="entry name" value="ENOLASE"/>
    <property type="match status" value="1"/>
</dbReference>
<dbReference type="Pfam" id="PF00113">
    <property type="entry name" value="Enolase_C"/>
    <property type="match status" value="1"/>
</dbReference>
<dbReference type="Pfam" id="PF03952">
    <property type="entry name" value="Enolase_N"/>
    <property type="match status" value="1"/>
</dbReference>
<dbReference type="PIRSF" id="PIRSF001400">
    <property type="entry name" value="Enolase"/>
    <property type="match status" value="1"/>
</dbReference>
<dbReference type="PRINTS" id="PR00148">
    <property type="entry name" value="ENOLASE"/>
</dbReference>
<dbReference type="SFLD" id="SFLDF00002">
    <property type="entry name" value="enolase"/>
    <property type="match status" value="1"/>
</dbReference>
<dbReference type="SFLD" id="SFLDG00178">
    <property type="entry name" value="enolase"/>
    <property type="match status" value="1"/>
</dbReference>
<dbReference type="SMART" id="SM01192">
    <property type="entry name" value="Enolase_C"/>
    <property type="match status" value="1"/>
</dbReference>
<dbReference type="SMART" id="SM01193">
    <property type="entry name" value="Enolase_N"/>
    <property type="match status" value="1"/>
</dbReference>
<dbReference type="SUPFAM" id="SSF51604">
    <property type="entry name" value="Enolase C-terminal domain-like"/>
    <property type="match status" value="1"/>
</dbReference>
<dbReference type="SUPFAM" id="SSF54826">
    <property type="entry name" value="Enolase N-terminal domain-like"/>
    <property type="match status" value="1"/>
</dbReference>
<dbReference type="PROSITE" id="PS00164">
    <property type="entry name" value="ENOLASE"/>
    <property type="match status" value="1"/>
</dbReference>
<feature type="chain" id="PRO_0000133858" description="Enolase">
    <location>
        <begin position="1"/>
        <end position="427"/>
    </location>
</feature>
<feature type="active site" description="Proton donor" evidence="1">
    <location>
        <position position="205"/>
    </location>
</feature>
<feature type="active site" description="Proton acceptor" evidence="1">
    <location>
        <position position="337"/>
    </location>
</feature>
<feature type="binding site" evidence="1">
    <location>
        <position position="163"/>
    </location>
    <ligand>
        <name>(2R)-2-phosphoglycerate</name>
        <dbReference type="ChEBI" id="CHEBI:58289"/>
    </ligand>
</feature>
<feature type="binding site" evidence="1">
    <location>
        <position position="242"/>
    </location>
    <ligand>
        <name>Mg(2+)</name>
        <dbReference type="ChEBI" id="CHEBI:18420"/>
    </ligand>
</feature>
<feature type="binding site" evidence="1">
    <location>
        <position position="285"/>
    </location>
    <ligand>
        <name>Mg(2+)</name>
        <dbReference type="ChEBI" id="CHEBI:18420"/>
    </ligand>
</feature>
<feature type="binding site" evidence="1">
    <location>
        <position position="312"/>
    </location>
    <ligand>
        <name>Mg(2+)</name>
        <dbReference type="ChEBI" id="CHEBI:18420"/>
    </ligand>
</feature>
<feature type="binding site" evidence="1">
    <location>
        <position position="337"/>
    </location>
    <ligand>
        <name>(2R)-2-phosphoglycerate</name>
        <dbReference type="ChEBI" id="CHEBI:58289"/>
    </ligand>
</feature>
<feature type="binding site" evidence="1">
    <location>
        <position position="366"/>
    </location>
    <ligand>
        <name>(2R)-2-phosphoglycerate</name>
        <dbReference type="ChEBI" id="CHEBI:58289"/>
    </ligand>
</feature>
<feature type="binding site" evidence="1">
    <location>
        <position position="367"/>
    </location>
    <ligand>
        <name>(2R)-2-phosphoglycerate</name>
        <dbReference type="ChEBI" id="CHEBI:58289"/>
    </ligand>
</feature>
<feature type="binding site" evidence="1">
    <location>
        <position position="388"/>
    </location>
    <ligand>
        <name>(2R)-2-phosphoglycerate</name>
        <dbReference type="ChEBI" id="CHEBI:58289"/>
    </ligand>
</feature>
<accession>Q62J10</accession>
<evidence type="ECO:0000255" key="1">
    <source>
        <dbReference type="HAMAP-Rule" id="MF_00318"/>
    </source>
</evidence>
<name>ENO_BURMA</name>
<proteinExistence type="inferred from homology"/>
<protein>
    <recommendedName>
        <fullName evidence="1">Enolase</fullName>
        <ecNumber evidence="1">4.2.1.11</ecNumber>
    </recommendedName>
    <alternativeName>
        <fullName evidence="1">2-phospho-D-glycerate hydro-lyase</fullName>
    </alternativeName>
    <alternativeName>
        <fullName evidence="1">2-phosphoglycerate dehydratase</fullName>
    </alternativeName>
</protein>
<comment type="function">
    <text evidence="1">Catalyzes the reversible conversion of 2-phosphoglycerate (2-PG) into phosphoenolpyruvate (PEP). It is essential for the degradation of carbohydrates via glycolysis.</text>
</comment>
<comment type="catalytic activity">
    <reaction evidence="1">
        <text>(2R)-2-phosphoglycerate = phosphoenolpyruvate + H2O</text>
        <dbReference type="Rhea" id="RHEA:10164"/>
        <dbReference type="ChEBI" id="CHEBI:15377"/>
        <dbReference type="ChEBI" id="CHEBI:58289"/>
        <dbReference type="ChEBI" id="CHEBI:58702"/>
        <dbReference type="EC" id="4.2.1.11"/>
    </reaction>
</comment>
<comment type="cofactor">
    <cofactor evidence="1">
        <name>Mg(2+)</name>
        <dbReference type="ChEBI" id="CHEBI:18420"/>
    </cofactor>
    <text evidence="1">Binds a second Mg(2+) ion via substrate during catalysis.</text>
</comment>
<comment type="pathway">
    <text evidence="1">Carbohydrate degradation; glycolysis; pyruvate from D-glyceraldehyde 3-phosphate: step 4/5.</text>
</comment>
<comment type="subcellular location">
    <subcellularLocation>
        <location evidence="1">Cytoplasm</location>
    </subcellularLocation>
    <subcellularLocation>
        <location evidence="1">Secreted</location>
    </subcellularLocation>
    <subcellularLocation>
        <location evidence="1">Cell surface</location>
    </subcellularLocation>
    <text evidence="1">Fractions of enolase are present in both the cytoplasm and on the cell surface.</text>
</comment>
<comment type="similarity">
    <text evidence="1">Belongs to the enolase family.</text>
</comment>
<reference key="1">
    <citation type="journal article" date="2004" name="Proc. Natl. Acad. Sci. U.S.A.">
        <title>Structural flexibility in the Burkholderia mallei genome.</title>
        <authorList>
            <person name="Nierman W.C."/>
            <person name="DeShazer D."/>
            <person name="Kim H.S."/>
            <person name="Tettelin H."/>
            <person name="Nelson K.E."/>
            <person name="Feldblyum T.V."/>
            <person name="Ulrich R.L."/>
            <person name="Ronning C.M."/>
            <person name="Brinkac L.M."/>
            <person name="Daugherty S.C."/>
            <person name="Davidsen T.D."/>
            <person name="DeBoy R.T."/>
            <person name="Dimitrov G."/>
            <person name="Dodson R.J."/>
            <person name="Durkin A.S."/>
            <person name="Gwinn M.L."/>
            <person name="Haft D.H."/>
            <person name="Khouri H.M."/>
            <person name="Kolonay J.F."/>
            <person name="Madupu R."/>
            <person name="Mohammoud Y."/>
            <person name="Nelson W.C."/>
            <person name="Radune D."/>
            <person name="Romero C.M."/>
            <person name="Sarria S."/>
            <person name="Selengut J."/>
            <person name="Shamblin C."/>
            <person name="Sullivan S.A."/>
            <person name="White O."/>
            <person name="Yu Y."/>
            <person name="Zafar N."/>
            <person name="Zhou L."/>
            <person name="Fraser C.M."/>
        </authorList>
    </citation>
    <scope>NUCLEOTIDE SEQUENCE [LARGE SCALE GENOMIC DNA]</scope>
    <source>
        <strain>ATCC 23344</strain>
    </source>
</reference>
<organism>
    <name type="scientific">Burkholderia mallei (strain ATCC 23344)</name>
    <dbReference type="NCBI Taxonomy" id="243160"/>
    <lineage>
        <taxon>Bacteria</taxon>
        <taxon>Pseudomonadati</taxon>
        <taxon>Pseudomonadota</taxon>
        <taxon>Betaproteobacteria</taxon>
        <taxon>Burkholderiales</taxon>
        <taxon>Burkholderiaceae</taxon>
        <taxon>Burkholderia</taxon>
        <taxon>pseudomallei group</taxon>
    </lineage>
</organism>
<keyword id="KW-0963">Cytoplasm</keyword>
<keyword id="KW-0324">Glycolysis</keyword>
<keyword id="KW-0456">Lyase</keyword>
<keyword id="KW-0460">Magnesium</keyword>
<keyword id="KW-0479">Metal-binding</keyword>
<keyword id="KW-1185">Reference proteome</keyword>
<keyword id="KW-0964">Secreted</keyword>